<reference key="1">
    <citation type="submission" date="2007-07" db="EMBL/GenBank/DDBJ databases">
        <authorList>
            <consortium name="NIH - Mammalian Gene Collection (MGC) project"/>
        </authorList>
    </citation>
    <scope>NUCLEOTIDE SEQUENCE [LARGE SCALE MRNA] (ISOFORMS 1 AND 2)</scope>
    <source>
        <strain>Hereford</strain>
        <tissue>Thymus</tissue>
    </source>
</reference>
<accession>A7MB40</accession>
<accession>Q2HJB4</accession>
<evidence type="ECO:0000250" key="1"/>
<evidence type="ECO:0000250" key="2">
    <source>
        <dbReference type="UniProtKB" id="Q3U2K0"/>
    </source>
</evidence>
<evidence type="ECO:0000250" key="3">
    <source>
        <dbReference type="UniProtKB" id="Q96PV7"/>
    </source>
</evidence>
<evidence type="ECO:0000255" key="4"/>
<evidence type="ECO:0000256" key="5">
    <source>
        <dbReference type="SAM" id="MobiDB-lite"/>
    </source>
</evidence>
<evidence type="ECO:0000303" key="6">
    <source ref="1"/>
</evidence>
<evidence type="ECO:0000305" key="7"/>
<feature type="chain" id="PRO_0000344456" description="Protein FAM193B">
    <location>
        <begin position="1"/>
        <end position="823"/>
    </location>
</feature>
<feature type="region of interest" description="Disordered" evidence="5">
    <location>
        <begin position="1"/>
        <end position="78"/>
    </location>
</feature>
<feature type="region of interest" description="Disordered" evidence="5">
    <location>
        <begin position="158"/>
        <end position="191"/>
    </location>
</feature>
<feature type="region of interest" description="Disordered" evidence="5">
    <location>
        <begin position="209"/>
        <end position="281"/>
    </location>
</feature>
<feature type="region of interest" description="Disordered" evidence="5">
    <location>
        <begin position="381"/>
        <end position="409"/>
    </location>
</feature>
<feature type="region of interest" description="Disordered" evidence="5">
    <location>
        <begin position="503"/>
        <end position="583"/>
    </location>
</feature>
<feature type="region of interest" description="Disordered" evidence="5">
    <location>
        <begin position="599"/>
        <end position="775"/>
    </location>
</feature>
<feature type="coiled-coil region" evidence="4">
    <location>
        <begin position="422"/>
        <end position="484"/>
    </location>
</feature>
<feature type="compositionally biased region" description="Pro residues" evidence="5">
    <location>
        <begin position="26"/>
        <end position="36"/>
    </location>
</feature>
<feature type="compositionally biased region" description="Basic and acidic residues" evidence="5">
    <location>
        <begin position="52"/>
        <end position="64"/>
    </location>
</feature>
<feature type="compositionally biased region" description="Low complexity" evidence="5">
    <location>
        <begin position="168"/>
        <end position="184"/>
    </location>
</feature>
<feature type="compositionally biased region" description="Low complexity" evidence="5">
    <location>
        <begin position="263"/>
        <end position="281"/>
    </location>
</feature>
<feature type="compositionally biased region" description="Acidic residues" evidence="5">
    <location>
        <begin position="382"/>
        <end position="393"/>
    </location>
</feature>
<feature type="compositionally biased region" description="Polar residues" evidence="5">
    <location>
        <begin position="516"/>
        <end position="526"/>
    </location>
</feature>
<feature type="compositionally biased region" description="Polar residues" evidence="5">
    <location>
        <begin position="641"/>
        <end position="657"/>
    </location>
</feature>
<feature type="modified residue" description="Phosphoserine" evidence="2">
    <location>
        <position position="694"/>
    </location>
</feature>
<feature type="modified residue" description="Phosphoserine" evidence="3">
    <location>
        <position position="706"/>
    </location>
</feature>
<feature type="modified residue" description="Phosphoserine" evidence="3">
    <location>
        <position position="813"/>
    </location>
</feature>
<feature type="splice variant" id="VSP_034778" description="In isoform 2." evidence="6">
    <location>
        <begin position="1"/>
        <end position="374"/>
    </location>
</feature>
<feature type="splice variant" id="VSP_034779" description="In isoform 2." evidence="6">
    <original>CQLPQPCEADEGLGEEEDSSSERSSCTSSSTHQRDGKFCDCCYCEFFGHNA</original>
    <variation>MKGGALGGIPGEPAVDHRDVDELLEFINSTEPKVPNSARAAKRARHKLKKK</variation>
    <location>
        <begin position="375"/>
        <end position="425"/>
    </location>
</feature>
<name>F193B_BOVIN</name>
<comment type="subcellular location">
    <subcellularLocation>
        <location evidence="1">Cytoplasm</location>
    </subcellularLocation>
    <subcellularLocation>
        <location evidence="1">Nucleus</location>
    </subcellularLocation>
    <text evidence="1">Partly colocalized with an endoplasmic reticulum marker, HSP90B1. Shuttles between nucleus and cytoplasm (By similarity).</text>
</comment>
<comment type="alternative products">
    <event type="alternative splicing"/>
    <isoform>
        <id>A7MB40-1</id>
        <name>1</name>
        <sequence type="displayed"/>
    </isoform>
    <isoform>
        <id>A7MB40-2</id>
        <name>2</name>
        <sequence type="described" ref="VSP_034778 VSP_034779"/>
    </isoform>
</comment>
<comment type="similarity">
    <text evidence="7">Belongs to the FAM193 family.</text>
</comment>
<keyword id="KW-0025">Alternative splicing</keyword>
<keyword id="KW-0175">Coiled coil</keyword>
<keyword id="KW-0963">Cytoplasm</keyword>
<keyword id="KW-0539">Nucleus</keyword>
<keyword id="KW-0597">Phosphoprotein</keyword>
<keyword id="KW-1185">Reference proteome</keyword>
<gene>
    <name type="primary">FAM193B</name>
</gene>
<organism>
    <name type="scientific">Bos taurus</name>
    <name type="common">Bovine</name>
    <dbReference type="NCBI Taxonomy" id="9913"/>
    <lineage>
        <taxon>Eukaryota</taxon>
        <taxon>Metazoa</taxon>
        <taxon>Chordata</taxon>
        <taxon>Craniata</taxon>
        <taxon>Vertebrata</taxon>
        <taxon>Euteleostomi</taxon>
        <taxon>Mammalia</taxon>
        <taxon>Eutheria</taxon>
        <taxon>Laurasiatheria</taxon>
        <taxon>Artiodactyla</taxon>
        <taxon>Ruminantia</taxon>
        <taxon>Pecora</taxon>
        <taxon>Bovidae</taxon>
        <taxon>Bovinae</taxon>
        <taxon>Bos</taxon>
    </lineage>
</organism>
<protein>
    <recommendedName>
        <fullName>Protein FAM193B</fullName>
    </recommendedName>
</protein>
<proteinExistence type="evidence at transcript level"/>
<dbReference type="EMBL" id="BC113217">
    <property type="protein sequence ID" value="AAI13218.1"/>
    <property type="molecule type" value="mRNA"/>
</dbReference>
<dbReference type="EMBL" id="BC151322">
    <property type="protein sequence ID" value="AAI51323.1"/>
    <property type="molecule type" value="mRNA"/>
</dbReference>
<dbReference type="RefSeq" id="NP_001039898.2">
    <molecule id="A7MB40-1"/>
    <property type="nucleotide sequence ID" value="NM_001046433.2"/>
</dbReference>
<dbReference type="SMR" id="A7MB40"/>
<dbReference type="FunCoup" id="A7MB40">
    <property type="interactions" value="2550"/>
</dbReference>
<dbReference type="STRING" id="9913.ENSBTAP00000020211"/>
<dbReference type="PaxDb" id="9913-ENSBTAP00000049740"/>
<dbReference type="Ensembl" id="ENSBTAT00000054949.3">
    <molecule id="A7MB40-1"/>
    <property type="protein sequence ID" value="ENSBTAP00000049740.1"/>
    <property type="gene ID" value="ENSBTAG00000015192.7"/>
</dbReference>
<dbReference type="Ensembl" id="ENSBTAT00000104503.1">
    <molecule id="A7MB40-2"/>
    <property type="protein sequence ID" value="ENSBTAP00000088768.1"/>
    <property type="gene ID" value="ENSBTAG00000015192.7"/>
</dbReference>
<dbReference type="GeneID" id="538655"/>
<dbReference type="KEGG" id="bta:538655"/>
<dbReference type="CTD" id="54540"/>
<dbReference type="VEuPathDB" id="HostDB:ENSBTAG00000015192"/>
<dbReference type="eggNOG" id="ENOG502QV04">
    <property type="taxonomic scope" value="Eukaryota"/>
</dbReference>
<dbReference type="GeneTree" id="ENSGT00390000000973"/>
<dbReference type="HOGENOM" id="CLU_012556_0_0_1"/>
<dbReference type="InParanoid" id="A7MB40"/>
<dbReference type="OrthoDB" id="10044608at2759"/>
<dbReference type="TreeFam" id="TF330223"/>
<dbReference type="Proteomes" id="UP000009136">
    <property type="component" value="Chromosome 7"/>
</dbReference>
<dbReference type="Bgee" id="ENSBTAG00000015192">
    <property type="expression patterns" value="Expressed in laryngeal cartilage and 104 other cell types or tissues"/>
</dbReference>
<dbReference type="GO" id="GO:0005737">
    <property type="term" value="C:cytoplasm"/>
    <property type="evidence" value="ECO:0000250"/>
    <property type="project" value="UniProtKB"/>
</dbReference>
<dbReference type="GO" id="GO:0005634">
    <property type="term" value="C:nucleus"/>
    <property type="evidence" value="ECO:0000250"/>
    <property type="project" value="UniProtKB"/>
</dbReference>
<dbReference type="InterPro" id="IPR029717">
    <property type="entry name" value="FAM193"/>
</dbReference>
<dbReference type="InterPro" id="IPR031802">
    <property type="entry name" value="FAM193_C"/>
</dbReference>
<dbReference type="PANTHER" id="PTHR15109">
    <property type="entry name" value="AGAP004327-PA"/>
    <property type="match status" value="1"/>
</dbReference>
<dbReference type="PANTHER" id="PTHR15109:SF3">
    <property type="entry name" value="PROTEIN FAM193B"/>
    <property type="match status" value="1"/>
</dbReference>
<dbReference type="Pfam" id="PF15914">
    <property type="entry name" value="FAM193_C"/>
    <property type="match status" value="1"/>
</dbReference>
<sequence length="823" mass="88041">MTRRRSRPSGGAGRRERARATGPQKPQAPEPPPPPSLEAGAGAGPPEAPAEPYRDDPREEDEPKLAPGPQVPPTTSQSVQTCCLLCHRERKGWEEGPSQNGLVLQGEKLPPDFMPKLVKNLLGEMPLWVCQSCRKSMEEDERQTGREHAVAISLSHTSCKSQSCGGDSHSSSSSSSSSSSSSSSCHGNSGDWDPSSFLSAHKLSGLWNSPHSSGAMPGGSLGSPPTIPGEVFPISEHHRHSDLTAPPNSPTGHHPQPAPLIPSHPGSFGSPPHPHLLPTTPAVHFPAQVSECPVAVAAAPHTPGPCQSPHLPSTSMPLLKMPPPFSGCSHPCSGHCSGHCSGPLLPPPSSQQLPSTHSRDPGCKGHKFTHSGLTCQLPQPCEADEGLGEEEDSSSERSSCTSSSTHQRDGKFCDCCYCEFFGHNAEKEKAQLAAEALKQANRSVSGSRELRPARESLLGWPDRELDRVNSFLNSRLQEIKNTVKDSICASFSMCELSVDSNGFSKEGATEPKPQSLAPSNPSGSSEQRPDINLDLSPLTLGSPQNHMLQAPGEPAPPWAEMRSPHPPWTEVKGPPPGIIPENGLVRRLNTVPNLSRMIWVKTPKPGNPSSEEPSIKGAPGCKQELPEPVASGGKPRKGKRQGNQAKKSEVSPASQSPACLETPSAKGQTPSPKQPSKAPEPPRVDSCAEAGEGSQGTRPGPGWADSPKADKEKGNSWRNWPGEAKARPLEQESVQPPGPARPQSFQQGKGRSRRSRNKQEKSASSLDDVFLPKDMDGVEMDETDREVEYFKRFCLDSAKQTRQKVAVNWTNFSLKKTTPSTAQ</sequence>